<proteinExistence type="inferred from homology"/>
<keyword id="KW-0067">ATP-binding</keyword>
<keyword id="KW-0317">Glutathione biosynthesis</keyword>
<keyword id="KW-0436">Ligase</keyword>
<keyword id="KW-0547">Nucleotide-binding</keyword>
<accession>A9N0B5</accession>
<evidence type="ECO:0000255" key="1">
    <source>
        <dbReference type="HAMAP-Rule" id="MF_00578"/>
    </source>
</evidence>
<dbReference type="EC" id="6.3.2.2" evidence="1"/>
<dbReference type="EMBL" id="CP000886">
    <property type="protein sequence ID" value="ABX68849.1"/>
    <property type="molecule type" value="Genomic_DNA"/>
</dbReference>
<dbReference type="RefSeq" id="WP_000611821.1">
    <property type="nucleotide sequence ID" value="NC_010102.1"/>
</dbReference>
<dbReference type="SMR" id="A9N0B5"/>
<dbReference type="KEGG" id="spq:SPAB_03503"/>
<dbReference type="PATRIC" id="fig|1016998.12.peg.3302"/>
<dbReference type="HOGENOM" id="CLU_020728_3_0_6"/>
<dbReference type="BioCyc" id="SENT1016998:SPAB_RS14270-MONOMER"/>
<dbReference type="UniPathway" id="UPA00142">
    <property type="reaction ID" value="UER00209"/>
</dbReference>
<dbReference type="Proteomes" id="UP000008556">
    <property type="component" value="Chromosome"/>
</dbReference>
<dbReference type="GO" id="GO:0005829">
    <property type="term" value="C:cytosol"/>
    <property type="evidence" value="ECO:0007669"/>
    <property type="project" value="TreeGrafter"/>
</dbReference>
<dbReference type="GO" id="GO:0005524">
    <property type="term" value="F:ATP binding"/>
    <property type="evidence" value="ECO:0007669"/>
    <property type="project" value="UniProtKB-KW"/>
</dbReference>
<dbReference type="GO" id="GO:0004357">
    <property type="term" value="F:glutamate-cysteine ligase activity"/>
    <property type="evidence" value="ECO:0007669"/>
    <property type="project" value="UniProtKB-UniRule"/>
</dbReference>
<dbReference type="GO" id="GO:0046872">
    <property type="term" value="F:metal ion binding"/>
    <property type="evidence" value="ECO:0007669"/>
    <property type="project" value="TreeGrafter"/>
</dbReference>
<dbReference type="GO" id="GO:0006750">
    <property type="term" value="P:glutathione biosynthetic process"/>
    <property type="evidence" value="ECO:0007669"/>
    <property type="project" value="UniProtKB-UniRule"/>
</dbReference>
<dbReference type="FunFam" id="3.30.590.20:FF:000001">
    <property type="entry name" value="Glutamate--cysteine ligase"/>
    <property type="match status" value="1"/>
</dbReference>
<dbReference type="Gene3D" id="3.30.590.20">
    <property type="match status" value="1"/>
</dbReference>
<dbReference type="HAMAP" id="MF_00578">
    <property type="entry name" value="Glu_cys_ligase"/>
    <property type="match status" value="1"/>
</dbReference>
<dbReference type="InterPro" id="IPR014746">
    <property type="entry name" value="Gln_synth/guanido_kin_cat_dom"/>
</dbReference>
<dbReference type="InterPro" id="IPR007370">
    <property type="entry name" value="Glu_cys_ligase"/>
</dbReference>
<dbReference type="InterPro" id="IPR006334">
    <property type="entry name" value="Glut_cys_ligase"/>
</dbReference>
<dbReference type="NCBIfam" id="TIGR01434">
    <property type="entry name" value="glu_cys_ligase"/>
    <property type="match status" value="1"/>
</dbReference>
<dbReference type="PANTHER" id="PTHR38761">
    <property type="entry name" value="GLUTAMATE--CYSTEINE LIGASE"/>
    <property type="match status" value="1"/>
</dbReference>
<dbReference type="PANTHER" id="PTHR38761:SF1">
    <property type="entry name" value="GLUTAMATE--CYSTEINE LIGASE"/>
    <property type="match status" value="1"/>
</dbReference>
<dbReference type="Pfam" id="PF04262">
    <property type="entry name" value="Glu_cys_ligase"/>
    <property type="match status" value="1"/>
</dbReference>
<dbReference type="SUPFAM" id="SSF55931">
    <property type="entry name" value="Glutamine synthetase/guanido kinase"/>
    <property type="match status" value="1"/>
</dbReference>
<gene>
    <name evidence="1" type="primary">gshA</name>
    <name type="ordered locus">SPAB_03503</name>
</gene>
<organism>
    <name type="scientific">Salmonella paratyphi B (strain ATCC BAA-1250 / SPB7)</name>
    <dbReference type="NCBI Taxonomy" id="1016998"/>
    <lineage>
        <taxon>Bacteria</taxon>
        <taxon>Pseudomonadati</taxon>
        <taxon>Pseudomonadota</taxon>
        <taxon>Gammaproteobacteria</taxon>
        <taxon>Enterobacterales</taxon>
        <taxon>Enterobacteriaceae</taxon>
        <taxon>Salmonella</taxon>
    </lineage>
</organism>
<reference key="1">
    <citation type="submission" date="2007-11" db="EMBL/GenBank/DDBJ databases">
        <authorList>
            <consortium name="The Salmonella enterica serovar Paratyphi B Genome Sequencing Project"/>
            <person name="McClelland M."/>
            <person name="Sanderson E.K."/>
            <person name="Porwollik S."/>
            <person name="Spieth J."/>
            <person name="Clifton W.S."/>
            <person name="Fulton R."/>
            <person name="Cordes M."/>
            <person name="Wollam A."/>
            <person name="Shah N."/>
            <person name="Pepin K."/>
            <person name="Bhonagiri V."/>
            <person name="Nash W."/>
            <person name="Johnson M."/>
            <person name="Thiruvilangam P."/>
            <person name="Wilson R."/>
        </authorList>
    </citation>
    <scope>NUCLEOTIDE SEQUENCE [LARGE SCALE GENOMIC DNA]</scope>
    <source>
        <strain>ATCC BAA-1250 / SPB7</strain>
    </source>
</reference>
<sequence length="518" mass="58384">MIPDVSQALAWLEKHPQALKGIQRGLERETLRVNADGTLATTGHPEALGSALTHKWITTDFAEALLEFITPVDGDIQHMLTFMRDLHRYTARKLGDERMWPLSMPCYIAEGQDIELAQYGTSNTGRFKTLYREGLKNRYGALMQTISGVHYNFSLPMAFWQAKCGVTEGEAAKEKISAGYFRLIRNYYRFGWVIPYLFGASPAICSSFLQGKPTTLPFEKTDCGMYYLPYATSLRLSDLGYTNKSQSNLGITFNDLHEYVAGLKRAIKTPSEEYARIGVEKDGKRLQINSNVLQIENELYAPIRPKRVTRSGESPSDALLRGGIEYIEVRSLDINPFSPIGVDEQQVRFLDLFMVWCVLADAPEMSSDELLCTRTNWNRVILEGRKPGLTLGIGCETAQFPLPKVGKDLFRDLKRVAQTLDSIHGGEEYQKVCDELVACFDNPELTFSARILRSMIDEGIGGTGKAFGEAYRNLLREEPLEILQEEEFIAERDASVRRQQEIEAADTEPFAAWLAKHA</sequence>
<name>GSH1_SALPB</name>
<protein>
    <recommendedName>
        <fullName evidence="1">Glutamate--cysteine ligase</fullName>
        <ecNumber evidence="1">6.3.2.2</ecNumber>
    </recommendedName>
    <alternativeName>
        <fullName evidence="1">Gamma-ECS</fullName>
        <shortName evidence="1">GCS</shortName>
    </alternativeName>
    <alternativeName>
        <fullName evidence="1">Gamma-glutamylcysteine synthetase</fullName>
    </alternativeName>
</protein>
<feature type="chain" id="PRO_1000082360" description="Glutamate--cysteine ligase">
    <location>
        <begin position="1"/>
        <end position="518"/>
    </location>
</feature>
<comment type="catalytic activity">
    <reaction evidence="1">
        <text>L-cysteine + L-glutamate + ATP = gamma-L-glutamyl-L-cysteine + ADP + phosphate + H(+)</text>
        <dbReference type="Rhea" id="RHEA:13285"/>
        <dbReference type="ChEBI" id="CHEBI:15378"/>
        <dbReference type="ChEBI" id="CHEBI:29985"/>
        <dbReference type="ChEBI" id="CHEBI:30616"/>
        <dbReference type="ChEBI" id="CHEBI:35235"/>
        <dbReference type="ChEBI" id="CHEBI:43474"/>
        <dbReference type="ChEBI" id="CHEBI:58173"/>
        <dbReference type="ChEBI" id="CHEBI:456216"/>
        <dbReference type="EC" id="6.3.2.2"/>
    </reaction>
</comment>
<comment type="pathway">
    <text evidence="1">Sulfur metabolism; glutathione biosynthesis; glutathione from L-cysteine and L-glutamate: step 1/2.</text>
</comment>
<comment type="similarity">
    <text evidence="1">Belongs to the glutamate--cysteine ligase type 1 family. Type 1 subfamily.</text>
</comment>